<dbReference type="EC" id="2.7.7.23" evidence="1"/>
<dbReference type="EC" id="2.3.1.157" evidence="1"/>
<dbReference type="EMBL" id="CP001074">
    <property type="protein sequence ID" value="ACE91098.1"/>
    <property type="molecule type" value="Genomic_DNA"/>
</dbReference>
<dbReference type="SMR" id="B3PZN3"/>
<dbReference type="KEGG" id="rec:RHECIAT_CH0002140"/>
<dbReference type="eggNOG" id="COG1207">
    <property type="taxonomic scope" value="Bacteria"/>
</dbReference>
<dbReference type="HOGENOM" id="CLU_029499_15_2_5"/>
<dbReference type="UniPathway" id="UPA00113">
    <property type="reaction ID" value="UER00532"/>
</dbReference>
<dbReference type="UniPathway" id="UPA00113">
    <property type="reaction ID" value="UER00533"/>
</dbReference>
<dbReference type="UniPathway" id="UPA00973"/>
<dbReference type="Proteomes" id="UP000008817">
    <property type="component" value="Chromosome"/>
</dbReference>
<dbReference type="GO" id="GO:0005737">
    <property type="term" value="C:cytoplasm"/>
    <property type="evidence" value="ECO:0007669"/>
    <property type="project" value="UniProtKB-SubCell"/>
</dbReference>
<dbReference type="GO" id="GO:0016020">
    <property type="term" value="C:membrane"/>
    <property type="evidence" value="ECO:0007669"/>
    <property type="project" value="GOC"/>
</dbReference>
<dbReference type="GO" id="GO:0019134">
    <property type="term" value="F:glucosamine-1-phosphate N-acetyltransferase activity"/>
    <property type="evidence" value="ECO:0007669"/>
    <property type="project" value="UniProtKB-UniRule"/>
</dbReference>
<dbReference type="GO" id="GO:0000287">
    <property type="term" value="F:magnesium ion binding"/>
    <property type="evidence" value="ECO:0007669"/>
    <property type="project" value="UniProtKB-UniRule"/>
</dbReference>
<dbReference type="GO" id="GO:0003977">
    <property type="term" value="F:UDP-N-acetylglucosamine diphosphorylase activity"/>
    <property type="evidence" value="ECO:0007669"/>
    <property type="project" value="UniProtKB-UniRule"/>
</dbReference>
<dbReference type="GO" id="GO:0000902">
    <property type="term" value="P:cell morphogenesis"/>
    <property type="evidence" value="ECO:0007669"/>
    <property type="project" value="UniProtKB-UniRule"/>
</dbReference>
<dbReference type="GO" id="GO:0071555">
    <property type="term" value="P:cell wall organization"/>
    <property type="evidence" value="ECO:0007669"/>
    <property type="project" value="UniProtKB-KW"/>
</dbReference>
<dbReference type="GO" id="GO:0009245">
    <property type="term" value="P:lipid A biosynthetic process"/>
    <property type="evidence" value="ECO:0007669"/>
    <property type="project" value="UniProtKB-UniRule"/>
</dbReference>
<dbReference type="GO" id="GO:0009252">
    <property type="term" value="P:peptidoglycan biosynthetic process"/>
    <property type="evidence" value="ECO:0007669"/>
    <property type="project" value="UniProtKB-UniRule"/>
</dbReference>
<dbReference type="GO" id="GO:0008360">
    <property type="term" value="P:regulation of cell shape"/>
    <property type="evidence" value="ECO:0007669"/>
    <property type="project" value="UniProtKB-KW"/>
</dbReference>
<dbReference type="GO" id="GO:0006048">
    <property type="term" value="P:UDP-N-acetylglucosamine biosynthetic process"/>
    <property type="evidence" value="ECO:0007669"/>
    <property type="project" value="UniProtKB-UniPathway"/>
</dbReference>
<dbReference type="CDD" id="cd02540">
    <property type="entry name" value="GT2_GlmU_N_bac"/>
    <property type="match status" value="1"/>
</dbReference>
<dbReference type="CDD" id="cd03353">
    <property type="entry name" value="LbH_GlmU_C"/>
    <property type="match status" value="1"/>
</dbReference>
<dbReference type="Gene3D" id="2.160.10.10">
    <property type="entry name" value="Hexapeptide repeat proteins"/>
    <property type="match status" value="1"/>
</dbReference>
<dbReference type="Gene3D" id="3.90.550.10">
    <property type="entry name" value="Spore Coat Polysaccharide Biosynthesis Protein SpsA, Chain A"/>
    <property type="match status" value="1"/>
</dbReference>
<dbReference type="HAMAP" id="MF_01631">
    <property type="entry name" value="GlmU"/>
    <property type="match status" value="1"/>
</dbReference>
<dbReference type="InterPro" id="IPR005882">
    <property type="entry name" value="Bifunctional_GlmU"/>
</dbReference>
<dbReference type="InterPro" id="IPR050065">
    <property type="entry name" value="GlmU-like"/>
</dbReference>
<dbReference type="InterPro" id="IPR038009">
    <property type="entry name" value="GlmU_C_LbH"/>
</dbReference>
<dbReference type="InterPro" id="IPR001451">
    <property type="entry name" value="Hexapep"/>
</dbReference>
<dbReference type="InterPro" id="IPR018357">
    <property type="entry name" value="Hexapep_transf_CS"/>
</dbReference>
<dbReference type="InterPro" id="IPR025877">
    <property type="entry name" value="MobA-like_NTP_Trfase"/>
</dbReference>
<dbReference type="InterPro" id="IPR029044">
    <property type="entry name" value="Nucleotide-diphossugar_trans"/>
</dbReference>
<dbReference type="InterPro" id="IPR011004">
    <property type="entry name" value="Trimer_LpxA-like_sf"/>
</dbReference>
<dbReference type="NCBIfam" id="TIGR01173">
    <property type="entry name" value="glmU"/>
    <property type="match status" value="1"/>
</dbReference>
<dbReference type="NCBIfam" id="NF010933">
    <property type="entry name" value="PRK14353.1"/>
    <property type="match status" value="1"/>
</dbReference>
<dbReference type="PANTHER" id="PTHR43584:SF3">
    <property type="entry name" value="BIFUNCTIONAL PROTEIN GLMU"/>
    <property type="match status" value="1"/>
</dbReference>
<dbReference type="PANTHER" id="PTHR43584">
    <property type="entry name" value="NUCLEOTIDYL TRANSFERASE"/>
    <property type="match status" value="1"/>
</dbReference>
<dbReference type="Pfam" id="PF00132">
    <property type="entry name" value="Hexapep"/>
    <property type="match status" value="2"/>
</dbReference>
<dbReference type="Pfam" id="PF12804">
    <property type="entry name" value="NTP_transf_3"/>
    <property type="match status" value="1"/>
</dbReference>
<dbReference type="SUPFAM" id="SSF53448">
    <property type="entry name" value="Nucleotide-diphospho-sugar transferases"/>
    <property type="match status" value="1"/>
</dbReference>
<dbReference type="SUPFAM" id="SSF51161">
    <property type="entry name" value="Trimeric LpxA-like enzymes"/>
    <property type="match status" value="1"/>
</dbReference>
<dbReference type="PROSITE" id="PS00101">
    <property type="entry name" value="HEXAPEP_TRANSFERASES"/>
    <property type="match status" value="1"/>
</dbReference>
<reference key="1">
    <citation type="journal article" date="2010" name="Appl. Environ. Microbiol.">
        <title>Conserved symbiotic plasmid DNA sequences in the multireplicon pangenomic structure of Rhizobium etli.</title>
        <authorList>
            <person name="Gonzalez V."/>
            <person name="Acosta J.L."/>
            <person name="Santamaria R.I."/>
            <person name="Bustos P."/>
            <person name="Fernandez J.L."/>
            <person name="Hernandez Gonzalez I.L."/>
            <person name="Diaz R."/>
            <person name="Flores M."/>
            <person name="Palacios R."/>
            <person name="Mora J."/>
            <person name="Davila G."/>
        </authorList>
    </citation>
    <scope>NUCLEOTIDE SEQUENCE [LARGE SCALE GENOMIC DNA]</scope>
    <source>
        <strain>CIAT 652</strain>
    </source>
</reference>
<protein>
    <recommendedName>
        <fullName evidence="1">Bifunctional protein GlmU</fullName>
    </recommendedName>
    <domain>
        <recommendedName>
            <fullName evidence="1">UDP-N-acetylglucosamine pyrophosphorylase</fullName>
            <ecNumber evidence="1">2.7.7.23</ecNumber>
        </recommendedName>
        <alternativeName>
            <fullName evidence="1">N-acetylglucosamine-1-phosphate uridyltransferase</fullName>
        </alternativeName>
    </domain>
    <domain>
        <recommendedName>
            <fullName evidence="1">Glucosamine-1-phosphate N-acetyltransferase</fullName>
            <ecNumber evidence="1">2.3.1.157</ecNumber>
        </recommendedName>
    </domain>
</protein>
<feature type="chain" id="PRO_1000186475" description="Bifunctional protein GlmU">
    <location>
        <begin position="1"/>
        <end position="453"/>
    </location>
</feature>
<feature type="region of interest" description="Pyrophosphorylase" evidence="1">
    <location>
        <begin position="1"/>
        <end position="231"/>
    </location>
</feature>
<feature type="region of interest" description="Linker" evidence="1">
    <location>
        <begin position="232"/>
        <end position="252"/>
    </location>
</feature>
<feature type="region of interest" description="N-acetyltransferase" evidence="1">
    <location>
        <begin position="253"/>
        <end position="453"/>
    </location>
</feature>
<feature type="active site" description="Proton acceptor" evidence="1">
    <location>
        <position position="348"/>
    </location>
</feature>
<feature type="binding site" evidence="1">
    <location>
        <begin position="10"/>
        <end position="13"/>
    </location>
    <ligand>
        <name>UDP-N-acetyl-alpha-D-glucosamine</name>
        <dbReference type="ChEBI" id="CHEBI:57705"/>
    </ligand>
</feature>
<feature type="binding site" evidence="1">
    <location>
        <position position="24"/>
    </location>
    <ligand>
        <name>UDP-N-acetyl-alpha-D-glucosamine</name>
        <dbReference type="ChEBI" id="CHEBI:57705"/>
    </ligand>
</feature>
<feature type="binding site" evidence="1">
    <location>
        <position position="77"/>
    </location>
    <ligand>
        <name>UDP-N-acetyl-alpha-D-glucosamine</name>
        <dbReference type="ChEBI" id="CHEBI:57705"/>
    </ligand>
</feature>
<feature type="binding site" evidence="1">
    <location>
        <begin position="82"/>
        <end position="83"/>
    </location>
    <ligand>
        <name>UDP-N-acetyl-alpha-D-glucosamine</name>
        <dbReference type="ChEBI" id="CHEBI:57705"/>
    </ligand>
</feature>
<feature type="binding site" evidence="1">
    <location>
        <begin position="105"/>
        <end position="107"/>
    </location>
    <ligand>
        <name>UDP-N-acetyl-alpha-D-glucosamine</name>
        <dbReference type="ChEBI" id="CHEBI:57705"/>
    </ligand>
</feature>
<feature type="binding site" evidence="1">
    <location>
        <position position="107"/>
    </location>
    <ligand>
        <name>Mg(2+)</name>
        <dbReference type="ChEBI" id="CHEBI:18420"/>
    </ligand>
</feature>
<feature type="binding site" evidence="1">
    <location>
        <position position="143"/>
    </location>
    <ligand>
        <name>UDP-N-acetyl-alpha-D-glucosamine</name>
        <dbReference type="ChEBI" id="CHEBI:57705"/>
    </ligand>
</feature>
<feature type="binding site" evidence="1">
    <location>
        <position position="157"/>
    </location>
    <ligand>
        <name>UDP-N-acetyl-alpha-D-glucosamine</name>
        <dbReference type="ChEBI" id="CHEBI:57705"/>
    </ligand>
</feature>
<feature type="binding site" evidence="1">
    <location>
        <position position="172"/>
    </location>
    <ligand>
        <name>UDP-N-acetyl-alpha-D-glucosamine</name>
        <dbReference type="ChEBI" id="CHEBI:57705"/>
    </ligand>
</feature>
<feature type="binding site" evidence="1">
    <location>
        <position position="229"/>
    </location>
    <ligand>
        <name>Mg(2+)</name>
        <dbReference type="ChEBI" id="CHEBI:18420"/>
    </ligand>
</feature>
<feature type="binding site" evidence="1">
    <location>
        <position position="229"/>
    </location>
    <ligand>
        <name>UDP-N-acetyl-alpha-D-glucosamine</name>
        <dbReference type="ChEBI" id="CHEBI:57705"/>
    </ligand>
</feature>
<feature type="binding site" evidence="1">
    <location>
        <position position="318"/>
    </location>
    <ligand>
        <name>UDP-N-acetyl-alpha-D-glucosamine</name>
        <dbReference type="ChEBI" id="CHEBI:57705"/>
    </ligand>
</feature>
<feature type="binding site" evidence="1">
    <location>
        <position position="336"/>
    </location>
    <ligand>
        <name>UDP-N-acetyl-alpha-D-glucosamine</name>
        <dbReference type="ChEBI" id="CHEBI:57705"/>
    </ligand>
</feature>
<feature type="binding site" evidence="1">
    <location>
        <position position="351"/>
    </location>
    <ligand>
        <name>UDP-N-acetyl-alpha-D-glucosamine</name>
        <dbReference type="ChEBI" id="CHEBI:57705"/>
    </ligand>
</feature>
<feature type="binding site" evidence="1">
    <location>
        <position position="362"/>
    </location>
    <ligand>
        <name>UDP-N-acetyl-alpha-D-glucosamine</name>
        <dbReference type="ChEBI" id="CHEBI:57705"/>
    </ligand>
</feature>
<feature type="binding site" evidence="1">
    <location>
        <position position="365"/>
    </location>
    <ligand>
        <name>acetyl-CoA</name>
        <dbReference type="ChEBI" id="CHEBI:57288"/>
    </ligand>
</feature>
<feature type="binding site" evidence="1">
    <location>
        <begin position="371"/>
        <end position="372"/>
    </location>
    <ligand>
        <name>acetyl-CoA</name>
        <dbReference type="ChEBI" id="CHEBI:57288"/>
    </ligand>
</feature>
<feature type="binding site" evidence="1">
    <location>
        <position position="390"/>
    </location>
    <ligand>
        <name>acetyl-CoA</name>
        <dbReference type="ChEBI" id="CHEBI:57288"/>
    </ligand>
</feature>
<feature type="binding site" evidence="1">
    <location>
        <position position="408"/>
    </location>
    <ligand>
        <name>acetyl-CoA</name>
        <dbReference type="ChEBI" id="CHEBI:57288"/>
    </ligand>
</feature>
<feature type="binding site" evidence="1">
    <location>
        <position position="425"/>
    </location>
    <ligand>
        <name>acetyl-CoA</name>
        <dbReference type="ChEBI" id="CHEBI:57288"/>
    </ligand>
</feature>
<sequence length="453" mass="47393">MERTCLAVILAAGDSTRMKSSKSKVLHPVAGRPMIAHVVEAVASAGISSVALVVGRDAEEVAKAASIDGVGIESYLQKDRLGTGHAVLAARDAIAKGYDDILVTYGDVPLQTDAPLKAARQGLADGSDIVVIGFHSDRPTGYGRLLVKDGELIAIREEKDATDAERTVTWCNSGLMAINGRKALDLLSRIGNSNAKGEFYLTDLVEIARSLGGRVTAVDAPEIEMTGCNNRAELAVIERFWQERRRREMMLAGVTMIAPETVFLSYDTIIGQDALIEPNVVFGPGAVIDSGAVIHAFSHIEGAHVSEGATVGPFGRLRPGADLANGAKVGNFCEVKNGRIGEGAKVNHLTYIGDAVVGAGSNIGAGTITCNYDGVNKSETVIGENAFIGSNSSLVAPVTIGDGAYVGSGSVITADVPADALALGRARQEIKPERAKLLRERALAIKAAKRAKA</sequence>
<name>GLMU_RHIE6</name>
<keyword id="KW-0012">Acyltransferase</keyword>
<keyword id="KW-0133">Cell shape</keyword>
<keyword id="KW-0961">Cell wall biogenesis/degradation</keyword>
<keyword id="KW-0963">Cytoplasm</keyword>
<keyword id="KW-0460">Magnesium</keyword>
<keyword id="KW-0479">Metal-binding</keyword>
<keyword id="KW-0511">Multifunctional enzyme</keyword>
<keyword id="KW-0548">Nucleotidyltransferase</keyword>
<keyword id="KW-0573">Peptidoglycan synthesis</keyword>
<keyword id="KW-0677">Repeat</keyword>
<keyword id="KW-0808">Transferase</keyword>
<gene>
    <name evidence="1" type="primary">glmU</name>
    <name type="ordered locus">RHECIAT_CH0002140</name>
</gene>
<proteinExistence type="inferred from homology"/>
<comment type="function">
    <text evidence="1">Catalyzes the last two sequential reactions in the de novo biosynthetic pathway for UDP-N-acetylglucosamine (UDP-GlcNAc). The C-terminal domain catalyzes the transfer of acetyl group from acetyl coenzyme A to glucosamine-1-phosphate (GlcN-1-P) to produce N-acetylglucosamine-1-phosphate (GlcNAc-1-P), which is converted into UDP-GlcNAc by the transfer of uridine 5-monophosphate (from uridine 5-triphosphate), a reaction catalyzed by the N-terminal domain.</text>
</comment>
<comment type="catalytic activity">
    <reaction evidence="1">
        <text>alpha-D-glucosamine 1-phosphate + acetyl-CoA = N-acetyl-alpha-D-glucosamine 1-phosphate + CoA + H(+)</text>
        <dbReference type="Rhea" id="RHEA:13725"/>
        <dbReference type="ChEBI" id="CHEBI:15378"/>
        <dbReference type="ChEBI" id="CHEBI:57287"/>
        <dbReference type="ChEBI" id="CHEBI:57288"/>
        <dbReference type="ChEBI" id="CHEBI:57776"/>
        <dbReference type="ChEBI" id="CHEBI:58516"/>
        <dbReference type="EC" id="2.3.1.157"/>
    </reaction>
</comment>
<comment type="catalytic activity">
    <reaction evidence="1">
        <text>N-acetyl-alpha-D-glucosamine 1-phosphate + UTP + H(+) = UDP-N-acetyl-alpha-D-glucosamine + diphosphate</text>
        <dbReference type="Rhea" id="RHEA:13509"/>
        <dbReference type="ChEBI" id="CHEBI:15378"/>
        <dbReference type="ChEBI" id="CHEBI:33019"/>
        <dbReference type="ChEBI" id="CHEBI:46398"/>
        <dbReference type="ChEBI" id="CHEBI:57705"/>
        <dbReference type="ChEBI" id="CHEBI:57776"/>
        <dbReference type="EC" id="2.7.7.23"/>
    </reaction>
</comment>
<comment type="cofactor">
    <cofactor evidence="1">
        <name>Mg(2+)</name>
        <dbReference type="ChEBI" id="CHEBI:18420"/>
    </cofactor>
    <text evidence="1">Binds 1 Mg(2+) ion per subunit.</text>
</comment>
<comment type="pathway">
    <text evidence="1">Nucleotide-sugar biosynthesis; UDP-N-acetyl-alpha-D-glucosamine biosynthesis; N-acetyl-alpha-D-glucosamine 1-phosphate from alpha-D-glucosamine 6-phosphate (route II): step 2/2.</text>
</comment>
<comment type="pathway">
    <text evidence="1">Nucleotide-sugar biosynthesis; UDP-N-acetyl-alpha-D-glucosamine biosynthesis; UDP-N-acetyl-alpha-D-glucosamine from N-acetyl-alpha-D-glucosamine 1-phosphate: step 1/1.</text>
</comment>
<comment type="pathway">
    <text evidence="1">Bacterial outer membrane biogenesis; LPS lipid A biosynthesis.</text>
</comment>
<comment type="subunit">
    <text evidence="1">Homotrimer.</text>
</comment>
<comment type="subcellular location">
    <subcellularLocation>
        <location evidence="1">Cytoplasm</location>
    </subcellularLocation>
</comment>
<comment type="similarity">
    <text evidence="1">In the N-terminal section; belongs to the N-acetylglucosamine-1-phosphate uridyltransferase family.</text>
</comment>
<comment type="similarity">
    <text evidence="1">In the C-terminal section; belongs to the transferase hexapeptide repeat family.</text>
</comment>
<accession>B3PZN3</accession>
<organism>
    <name type="scientific">Rhizobium etli (strain CIAT 652)</name>
    <dbReference type="NCBI Taxonomy" id="491916"/>
    <lineage>
        <taxon>Bacteria</taxon>
        <taxon>Pseudomonadati</taxon>
        <taxon>Pseudomonadota</taxon>
        <taxon>Alphaproteobacteria</taxon>
        <taxon>Hyphomicrobiales</taxon>
        <taxon>Rhizobiaceae</taxon>
        <taxon>Rhizobium/Agrobacterium group</taxon>
        <taxon>Rhizobium</taxon>
    </lineage>
</organism>
<evidence type="ECO:0000255" key="1">
    <source>
        <dbReference type="HAMAP-Rule" id="MF_01631"/>
    </source>
</evidence>